<evidence type="ECO:0000255" key="1">
    <source>
        <dbReference type="HAMAP-Rule" id="MF_00122"/>
    </source>
</evidence>
<name>GATC_CLOB6</name>
<keyword id="KW-0067">ATP-binding</keyword>
<keyword id="KW-0436">Ligase</keyword>
<keyword id="KW-0547">Nucleotide-binding</keyword>
<keyword id="KW-0648">Protein biosynthesis</keyword>
<proteinExistence type="inferred from homology"/>
<gene>
    <name evidence="1" type="primary">gatC</name>
    <name type="ordered locus">CLJ_B3548</name>
</gene>
<dbReference type="EC" id="6.3.5.-" evidence="1"/>
<dbReference type="EMBL" id="CP001083">
    <property type="protein sequence ID" value="ACQ55137.1"/>
    <property type="molecule type" value="Genomic_DNA"/>
</dbReference>
<dbReference type="RefSeq" id="WP_003357679.1">
    <property type="nucleotide sequence ID" value="NC_012658.1"/>
</dbReference>
<dbReference type="SMR" id="C3KU98"/>
<dbReference type="GeneID" id="92940009"/>
<dbReference type="KEGG" id="cbi:CLJ_B3548"/>
<dbReference type="HOGENOM" id="CLU_105899_2_1_9"/>
<dbReference type="Proteomes" id="UP000002333">
    <property type="component" value="Chromosome"/>
</dbReference>
<dbReference type="GO" id="GO:0050566">
    <property type="term" value="F:asparaginyl-tRNA synthase (glutamine-hydrolyzing) activity"/>
    <property type="evidence" value="ECO:0007669"/>
    <property type="project" value="RHEA"/>
</dbReference>
<dbReference type="GO" id="GO:0005524">
    <property type="term" value="F:ATP binding"/>
    <property type="evidence" value="ECO:0007669"/>
    <property type="project" value="UniProtKB-KW"/>
</dbReference>
<dbReference type="GO" id="GO:0050567">
    <property type="term" value="F:glutaminyl-tRNA synthase (glutamine-hydrolyzing) activity"/>
    <property type="evidence" value="ECO:0007669"/>
    <property type="project" value="UniProtKB-UniRule"/>
</dbReference>
<dbReference type="GO" id="GO:0070681">
    <property type="term" value="P:glutaminyl-tRNAGln biosynthesis via transamidation"/>
    <property type="evidence" value="ECO:0007669"/>
    <property type="project" value="TreeGrafter"/>
</dbReference>
<dbReference type="GO" id="GO:0006450">
    <property type="term" value="P:regulation of translational fidelity"/>
    <property type="evidence" value="ECO:0007669"/>
    <property type="project" value="InterPro"/>
</dbReference>
<dbReference type="GO" id="GO:0006412">
    <property type="term" value="P:translation"/>
    <property type="evidence" value="ECO:0007669"/>
    <property type="project" value="UniProtKB-UniRule"/>
</dbReference>
<dbReference type="Gene3D" id="1.10.20.60">
    <property type="entry name" value="Glu-tRNAGln amidotransferase C subunit, N-terminal domain"/>
    <property type="match status" value="1"/>
</dbReference>
<dbReference type="HAMAP" id="MF_00122">
    <property type="entry name" value="GatC"/>
    <property type="match status" value="1"/>
</dbReference>
<dbReference type="InterPro" id="IPR036113">
    <property type="entry name" value="Asp/Glu-ADT_sf_sub_c"/>
</dbReference>
<dbReference type="InterPro" id="IPR003837">
    <property type="entry name" value="GatC"/>
</dbReference>
<dbReference type="NCBIfam" id="TIGR00135">
    <property type="entry name" value="gatC"/>
    <property type="match status" value="1"/>
</dbReference>
<dbReference type="PANTHER" id="PTHR15004">
    <property type="entry name" value="GLUTAMYL-TRNA(GLN) AMIDOTRANSFERASE SUBUNIT C, MITOCHONDRIAL"/>
    <property type="match status" value="1"/>
</dbReference>
<dbReference type="PANTHER" id="PTHR15004:SF0">
    <property type="entry name" value="GLUTAMYL-TRNA(GLN) AMIDOTRANSFERASE SUBUNIT C, MITOCHONDRIAL"/>
    <property type="match status" value="1"/>
</dbReference>
<dbReference type="Pfam" id="PF02686">
    <property type="entry name" value="GatC"/>
    <property type="match status" value="1"/>
</dbReference>
<dbReference type="SUPFAM" id="SSF141000">
    <property type="entry name" value="Glu-tRNAGln amidotransferase C subunit"/>
    <property type="match status" value="1"/>
</dbReference>
<accession>C3KU98</accession>
<organism>
    <name type="scientific">Clostridium botulinum (strain 657 / Type Ba4)</name>
    <dbReference type="NCBI Taxonomy" id="515621"/>
    <lineage>
        <taxon>Bacteria</taxon>
        <taxon>Bacillati</taxon>
        <taxon>Bacillota</taxon>
        <taxon>Clostridia</taxon>
        <taxon>Eubacteriales</taxon>
        <taxon>Clostridiaceae</taxon>
        <taxon>Clostridium</taxon>
    </lineage>
</organism>
<comment type="function">
    <text evidence="1">Allows the formation of correctly charged Asn-tRNA(Asn) or Gln-tRNA(Gln) through the transamidation of misacylated Asp-tRNA(Asn) or Glu-tRNA(Gln) in organisms which lack either or both of asparaginyl-tRNA or glutaminyl-tRNA synthetases. The reaction takes place in the presence of glutamine and ATP through an activated phospho-Asp-tRNA(Asn) or phospho-Glu-tRNA(Gln).</text>
</comment>
<comment type="catalytic activity">
    <reaction evidence="1">
        <text>L-glutamyl-tRNA(Gln) + L-glutamine + ATP + H2O = L-glutaminyl-tRNA(Gln) + L-glutamate + ADP + phosphate + H(+)</text>
        <dbReference type="Rhea" id="RHEA:17521"/>
        <dbReference type="Rhea" id="RHEA-COMP:9681"/>
        <dbReference type="Rhea" id="RHEA-COMP:9684"/>
        <dbReference type="ChEBI" id="CHEBI:15377"/>
        <dbReference type="ChEBI" id="CHEBI:15378"/>
        <dbReference type="ChEBI" id="CHEBI:29985"/>
        <dbReference type="ChEBI" id="CHEBI:30616"/>
        <dbReference type="ChEBI" id="CHEBI:43474"/>
        <dbReference type="ChEBI" id="CHEBI:58359"/>
        <dbReference type="ChEBI" id="CHEBI:78520"/>
        <dbReference type="ChEBI" id="CHEBI:78521"/>
        <dbReference type="ChEBI" id="CHEBI:456216"/>
    </reaction>
</comment>
<comment type="catalytic activity">
    <reaction evidence="1">
        <text>L-aspartyl-tRNA(Asn) + L-glutamine + ATP + H2O = L-asparaginyl-tRNA(Asn) + L-glutamate + ADP + phosphate + 2 H(+)</text>
        <dbReference type="Rhea" id="RHEA:14513"/>
        <dbReference type="Rhea" id="RHEA-COMP:9674"/>
        <dbReference type="Rhea" id="RHEA-COMP:9677"/>
        <dbReference type="ChEBI" id="CHEBI:15377"/>
        <dbReference type="ChEBI" id="CHEBI:15378"/>
        <dbReference type="ChEBI" id="CHEBI:29985"/>
        <dbReference type="ChEBI" id="CHEBI:30616"/>
        <dbReference type="ChEBI" id="CHEBI:43474"/>
        <dbReference type="ChEBI" id="CHEBI:58359"/>
        <dbReference type="ChEBI" id="CHEBI:78515"/>
        <dbReference type="ChEBI" id="CHEBI:78516"/>
        <dbReference type="ChEBI" id="CHEBI:456216"/>
    </reaction>
</comment>
<comment type="subunit">
    <text evidence="1">Heterotrimer of A, B and C subunits.</text>
</comment>
<comment type="similarity">
    <text evidence="1">Belongs to the GatC family.</text>
</comment>
<feature type="chain" id="PRO_1000203065" description="Aspartyl/glutamyl-tRNA(Asn/Gln) amidotransferase subunit C">
    <location>
        <begin position="1"/>
        <end position="95"/>
    </location>
</feature>
<sequence>MSVSKKDVEYVAELARLEFKEEEKDNFVNDLNKILNYMEKLDELNTDDVDIVVNPYYIENKYREDNVEKSMELKEVIDNAPESLEEYVIVPKVID</sequence>
<protein>
    <recommendedName>
        <fullName evidence="1">Aspartyl/glutamyl-tRNA(Asn/Gln) amidotransferase subunit C</fullName>
        <shortName evidence="1">Asp/Glu-ADT subunit C</shortName>
        <ecNumber evidence="1">6.3.5.-</ecNumber>
    </recommendedName>
</protein>
<reference key="1">
    <citation type="submission" date="2008-05" db="EMBL/GenBank/DDBJ databases">
        <title>Genome sequence of Clostridium botulinum Ba4 strain 657.</title>
        <authorList>
            <person name="Shrivastava S."/>
            <person name="Brown J.L."/>
            <person name="Bruce D."/>
            <person name="Detter C."/>
            <person name="Munk C."/>
            <person name="Smith L.A."/>
            <person name="Smith T.J."/>
            <person name="Sutton G."/>
            <person name="Brettin T.S."/>
        </authorList>
    </citation>
    <scope>NUCLEOTIDE SEQUENCE [LARGE SCALE GENOMIC DNA]</scope>
    <source>
        <strain>657 / Type Ba4</strain>
    </source>
</reference>